<name>YTFE_SALNS</name>
<protein>
    <recommendedName>
        <fullName evidence="1">Iron-sulfur cluster repair protein YtfE</fullName>
    </recommendedName>
</protein>
<comment type="function">
    <text evidence="1">Di-iron-containing protein involved in the repair of iron-sulfur clusters damaged by oxidative and nitrosative stress conditions.</text>
</comment>
<comment type="subunit">
    <text evidence="1">Homodimer.</text>
</comment>
<comment type="subcellular location">
    <subcellularLocation>
        <location evidence="1">Cytoplasm</location>
    </subcellularLocation>
</comment>
<comment type="similarity">
    <text evidence="1">Belongs to the RIC family. YtfE subfamily.</text>
</comment>
<reference key="1">
    <citation type="journal article" date="2011" name="J. Bacteriol.">
        <title>Comparative genomics of 28 Salmonella enterica isolates: evidence for CRISPR-mediated adaptive sublineage evolution.</title>
        <authorList>
            <person name="Fricke W.F."/>
            <person name="Mammel M.K."/>
            <person name="McDermott P.F."/>
            <person name="Tartera C."/>
            <person name="White D.G."/>
            <person name="Leclerc J.E."/>
            <person name="Ravel J."/>
            <person name="Cebula T.A."/>
        </authorList>
    </citation>
    <scope>NUCLEOTIDE SEQUENCE [LARGE SCALE GENOMIC DNA]</scope>
    <source>
        <strain>SL254</strain>
    </source>
</reference>
<accession>B4T3G2</accession>
<gene>
    <name evidence="1" type="primary">ytfE</name>
    <name type="ordered locus">SNSL254_A4762</name>
</gene>
<feature type="chain" id="PRO_1000148187" description="Iron-sulfur cluster repair protein YtfE">
    <location>
        <begin position="1"/>
        <end position="220"/>
    </location>
</feature>
<dbReference type="EMBL" id="CP001113">
    <property type="protein sequence ID" value="ACF63116.1"/>
    <property type="molecule type" value="Genomic_DNA"/>
</dbReference>
<dbReference type="RefSeq" id="WP_000331471.1">
    <property type="nucleotide sequence ID" value="NZ_CCMR01000003.1"/>
</dbReference>
<dbReference type="SMR" id="B4T3G2"/>
<dbReference type="KEGG" id="see:SNSL254_A4762"/>
<dbReference type="HOGENOM" id="CLU_076075_2_0_6"/>
<dbReference type="Proteomes" id="UP000008824">
    <property type="component" value="Chromosome"/>
</dbReference>
<dbReference type="GO" id="GO:0005737">
    <property type="term" value="C:cytoplasm"/>
    <property type="evidence" value="ECO:0007669"/>
    <property type="project" value="UniProtKB-SubCell"/>
</dbReference>
<dbReference type="GO" id="GO:0046872">
    <property type="term" value="F:metal ion binding"/>
    <property type="evidence" value="ECO:0007669"/>
    <property type="project" value="UniProtKB-KW"/>
</dbReference>
<dbReference type="GO" id="GO:0030091">
    <property type="term" value="P:protein repair"/>
    <property type="evidence" value="ECO:0007669"/>
    <property type="project" value="UniProtKB-UniRule"/>
</dbReference>
<dbReference type="GO" id="GO:0051409">
    <property type="term" value="P:response to nitrosative stress"/>
    <property type="evidence" value="ECO:0007669"/>
    <property type="project" value="UniProtKB-UniRule"/>
</dbReference>
<dbReference type="GO" id="GO:0006979">
    <property type="term" value="P:response to oxidative stress"/>
    <property type="evidence" value="ECO:0007669"/>
    <property type="project" value="UniProtKB-UniRule"/>
</dbReference>
<dbReference type="FunFam" id="1.20.120.520:FF:000001">
    <property type="entry name" value="Iron-sulfur cluster repair protein YtfE"/>
    <property type="match status" value="1"/>
</dbReference>
<dbReference type="Gene3D" id="1.20.120.520">
    <property type="entry name" value="nmb1532 protein domain like"/>
    <property type="match status" value="1"/>
</dbReference>
<dbReference type="HAMAP" id="MF_01606">
    <property type="entry name" value="RIC_YtfE"/>
    <property type="match status" value="1"/>
</dbReference>
<dbReference type="InterPro" id="IPR023742">
    <property type="entry name" value="FeS-repair_YftE"/>
</dbReference>
<dbReference type="InterPro" id="IPR012312">
    <property type="entry name" value="Hemerythrin-like"/>
</dbReference>
<dbReference type="InterPro" id="IPR019903">
    <property type="entry name" value="RIC_family"/>
</dbReference>
<dbReference type="NCBIfam" id="TIGR03652">
    <property type="entry name" value="FeS_repair_RIC"/>
    <property type="match status" value="1"/>
</dbReference>
<dbReference type="NCBIfam" id="NF008221">
    <property type="entry name" value="PRK10992.1"/>
    <property type="match status" value="1"/>
</dbReference>
<dbReference type="PANTHER" id="PTHR36438">
    <property type="entry name" value="IRON-SULFUR CLUSTER REPAIR PROTEIN YTFE"/>
    <property type="match status" value="1"/>
</dbReference>
<dbReference type="PANTHER" id="PTHR36438:SF1">
    <property type="entry name" value="IRON-SULFUR CLUSTER REPAIR PROTEIN YTFE"/>
    <property type="match status" value="1"/>
</dbReference>
<dbReference type="Pfam" id="PF01814">
    <property type="entry name" value="Hemerythrin"/>
    <property type="match status" value="1"/>
</dbReference>
<dbReference type="Pfam" id="PF04405">
    <property type="entry name" value="ScdA_N"/>
    <property type="match status" value="1"/>
</dbReference>
<proteinExistence type="inferred from homology"/>
<sequence length="220" mass="24911">MAYRDQPLGELALSIPRASALFRQYDMDYCCGGKQTLARAAARHDVDIDIIEAQLAQLAEQPIEKDWRAVPLADIIDHIVVRYHDRHREQLPELILQATKVERVHADKPNVPRGLTKYLTALHEELSSHMMKEEQILFPMIKQGMGRQATGPISVMESEHDEAGELVDVIKHVTQNVTPPPEACTTWKAMYNGINEMIDDLMEHISLENNVLFPRALAGE</sequence>
<evidence type="ECO:0000255" key="1">
    <source>
        <dbReference type="HAMAP-Rule" id="MF_01606"/>
    </source>
</evidence>
<organism>
    <name type="scientific">Salmonella newport (strain SL254)</name>
    <dbReference type="NCBI Taxonomy" id="423368"/>
    <lineage>
        <taxon>Bacteria</taxon>
        <taxon>Pseudomonadati</taxon>
        <taxon>Pseudomonadota</taxon>
        <taxon>Gammaproteobacteria</taxon>
        <taxon>Enterobacterales</taxon>
        <taxon>Enterobacteriaceae</taxon>
        <taxon>Salmonella</taxon>
    </lineage>
</organism>
<keyword id="KW-0963">Cytoplasm</keyword>
<keyword id="KW-0408">Iron</keyword>
<keyword id="KW-0479">Metal-binding</keyword>
<keyword id="KW-0346">Stress response</keyword>